<proteinExistence type="evidence at transcript level"/>
<name>TBD2A_BOVIN</name>
<protein>
    <recommendedName>
        <fullName>TBC1 domain family member 2A</fullName>
    </recommendedName>
</protein>
<sequence>MEGAQESPAESGSSVPWSEEPAGSAKVPEVSLSEESEGCTRPLEATPPKLCGYLSKFGGKGPIRGWKSRWFFFDERKCHLYYSRTAQDANPLDSIDLSSAVFDCKADAEEGTFEIKTPNRIITLKAATKQAMLYWLQQLQMKRWEFHNSLPALPAAHDAALAGNGPALRLELEQEEEEEEAFLCPVKTPTDLVGVAAAWQPVHARPLALQNISLKHLGTEIQNTMCNIRGNKQTQGANHRPPGEDSPLIEETQREEQPSPPGPGAPGKDPANSLKSSLTTSLIRKAKSQSNTFPLFSEGLMRNRTAQEKVLALEQQVLMLTKELKAQKELVKILHKALEAAQQEKRVSSAYLAAAQDKDRLELVRHKVRQIAELGRRVEALERERESLAQTASLQEQEIRELQQHVQLLLDKNQAKQQVICKLSEKVTQDFMKAPEEADRDFLSQQEKMEHLKDDMEAYRTQNRFLNSEIHQVTKIWRKVAEKEKALLMKCAYLQAQNCQVESKYLAGLRRLQEALGVEAGECSELLRQLIQEALQWEASEASADSVVLSPSTISEYDEYGFLTVPNYEVEDLRLLAKIQALEVHSHHLLAHEAVERPLRERWATLGELAPSAELKQLLRAGVPHEHRPRVWRWLIRLRVQHLQAPGCYQALLSRGQACKHSAARQIELDLNRTFPNNKHFTCPTSSFPDKLRRVLLAFSWQNPTIGYCQGLNRLAAIALLVLDEEESAFWCLVAIVETIMPADYYSKTLLASQVDQRVLQDLLLEKLPRLMAHLGQRHVDLSFITFNWFLVVFADSLISNILLQVWDAFLYEGIKVVFRYALAIFKYNEEALLRLQDSLEIYQYLHFFTKTICDSRKLMHIAFNDMNPFPMKQLRQLRAAHRERLEAELNELEQLKAEYLETRAAQGPAVPEGSPSEDEGEAEP</sequence>
<accession>A6QP29</accession>
<dbReference type="EMBL" id="BC149120">
    <property type="protein sequence ID" value="AAI49121.1"/>
    <property type="molecule type" value="mRNA"/>
</dbReference>
<dbReference type="RefSeq" id="NP_001095451.1">
    <property type="nucleotide sequence ID" value="NM_001101981.1"/>
</dbReference>
<dbReference type="SMR" id="A6QP29"/>
<dbReference type="FunCoup" id="A6QP29">
    <property type="interactions" value="124"/>
</dbReference>
<dbReference type="STRING" id="9913.ENSBTAP00000026052"/>
<dbReference type="PaxDb" id="9913-ENSBTAP00000026052"/>
<dbReference type="GeneID" id="513828"/>
<dbReference type="KEGG" id="bta:513828"/>
<dbReference type="CTD" id="55357"/>
<dbReference type="VEuPathDB" id="HostDB:ENSBTAG00000019550"/>
<dbReference type="eggNOG" id="KOG2058">
    <property type="taxonomic scope" value="Eukaryota"/>
</dbReference>
<dbReference type="HOGENOM" id="CLU_011278_0_0_1"/>
<dbReference type="InParanoid" id="A6QP29"/>
<dbReference type="OMA" id="RWEFCNT"/>
<dbReference type="OrthoDB" id="294251at2759"/>
<dbReference type="TreeFam" id="TF317336"/>
<dbReference type="Reactome" id="R-BTA-8854214">
    <property type="pathway name" value="TBC/RABGAPs"/>
</dbReference>
<dbReference type="Proteomes" id="UP000009136">
    <property type="component" value="Chromosome 8"/>
</dbReference>
<dbReference type="Bgee" id="ENSBTAG00000019550">
    <property type="expression patterns" value="Expressed in thyroid gland and 102 other cell types or tissues"/>
</dbReference>
<dbReference type="GO" id="GO:0070161">
    <property type="term" value="C:anchoring junction"/>
    <property type="evidence" value="ECO:0007669"/>
    <property type="project" value="UniProtKB-SubCell"/>
</dbReference>
<dbReference type="GO" id="GO:0030054">
    <property type="term" value="C:cell junction"/>
    <property type="evidence" value="ECO:0000250"/>
    <property type="project" value="UniProtKB"/>
</dbReference>
<dbReference type="GO" id="GO:0005737">
    <property type="term" value="C:cytoplasm"/>
    <property type="evidence" value="ECO:0000318"/>
    <property type="project" value="GO_Central"/>
</dbReference>
<dbReference type="GO" id="GO:0031410">
    <property type="term" value="C:cytoplasmic vesicle"/>
    <property type="evidence" value="ECO:0000250"/>
    <property type="project" value="UniProtKB"/>
</dbReference>
<dbReference type="GO" id="GO:0005886">
    <property type="term" value="C:plasma membrane"/>
    <property type="evidence" value="ECO:0000318"/>
    <property type="project" value="GO_Central"/>
</dbReference>
<dbReference type="GO" id="GO:0005096">
    <property type="term" value="F:GTPase activator activity"/>
    <property type="evidence" value="ECO:0000250"/>
    <property type="project" value="UniProtKB"/>
</dbReference>
<dbReference type="GO" id="GO:0043547">
    <property type="term" value="P:positive regulation of GTPase activity"/>
    <property type="evidence" value="ECO:0000250"/>
    <property type="project" value="UniProtKB"/>
</dbReference>
<dbReference type="CDD" id="cd01265">
    <property type="entry name" value="PH_TBC1D2A"/>
    <property type="match status" value="1"/>
</dbReference>
<dbReference type="FunFam" id="1.10.8.270:FF:000014">
    <property type="entry name" value="Putative TBC1 domain family member 2B"/>
    <property type="match status" value="1"/>
</dbReference>
<dbReference type="FunFam" id="2.30.29.30:FF:000248">
    <property type="entry name" value="TBC1 domain family member 2A isoform X1"/>
    <property type="match status" value="1"/>
</dbReference>
<dbReference type="FunFam" id="1.10.472.80:FF:000018">
    <property type="entry name" value="TBC1 domain family member 2B"/>
    <property type="match status" value="1"/>
</dbReference>
<dbReference type="Gene3D" id="2.30.29.30">
    <property type="entry name" value="Pleckstrin-homology domain (PH domain)/Phosphotyrosine-binding domain (PTB)"/>
    <property type="match status" value="1"/>
</dbReference>
<dbReference type="Gene3D" id="1.10.8.270">
    <property type="entry name" value="putative rabgap domain of human tbc1 domain family member 14 like domains"/>
    <property type="match status" value="1"/>
</dbReference>
<dbReference type="Gene3D" id="1.10.472.80">
    <property type="entry name" value="Ypt/Rab-GAP domain of gyp1p, domain 3"/>
    <property type="match status" value="1"/>
</dbReference>
<dbReference type="InterPro" id="IPR011993">
    <property type="entry name" value="PH-like_dom_sf"/>
</dbReference>
<dbReference type="InterPro" id="IPR001849">
    <property type="entry name" value="PH_domain"/>
</dbReference>
<dbReference type="InterPro" id="IPR000195">
    <property type="entry name" value="Rab-GAP-TBC_dom"/>
</dbReference>
<dbReference type="InterPro" id="IPR035969">
    <property type="entry name" value="Rab-GAP_TBC_sf"/>
</dbReference>
<dbReference type="InterPro" id="IPR050302">
    <property type="entry name" value="Rab_GAP_TBC_domain"/>
</dbReference>
<dbReference type="PANTHER" id="PTHR47219">
    <property type="entry name" value="RAB GTPASE-ACTIVATING PROTEIN 1-LIKE"/>
    <property type="match status" value="1"/>
</dbReference>
<dbReference type="PANTHER" id="PTHR47219:SF20">
    <property type="entry name" value="TBC1 DOMAIN FAMILY MEMBER 2B"/>
    <property type="match status" value="1"/>
</dbReference>
<dbReference type="Pfam" id="PF00169">
    <property type="entry name" value="PH"/>
    <property type="match status" value="1"/>
</dbReference>
<dbReference type="Pfam" id="PF00566">
    <property type="entry name" value="RabGAP-TBC"/>
    <property type="match status" value="1"/>
</dbReference>
<dbReference type="SMART" id="SM00233">
    <property type="entry name" value="PH"/>
    <property type="match status" value="1"/>
</dbReference>
<dbReference type="SMART" id="SM00164">
    <property type="entry name" value="TBC"/>
    <property type="match status" value="1"/>
</dbReference>
<dbReference type="SUPFAM" id="SSF50729">
    <property type="entry name" value="PH domain-like"/>
    <property type="match status" value="1"/>
</dbReference>
<dbReference type="SUPFAM" id="SSF47923">
    <property type="entry name" value="Ypt/Rab-GAP domain of gyp1p"/>
    <property type="match status" value="2"/>
</dbReference>
<dbReference type="PROSITE" id="PS50003">
    <property type="entry name" value="PH_DOMAIN"/>
    <property type="match status" value="1"/>
</dbReference>
<dbReference type="PROSITE" id="PS50086">
    <property type="entry name" value="TBC_RABGAP"/>
    <property type="match status" value="1"/>
</dbReference>
<organism>
    <name type="scientific">Bos taurus</name>
    <name type="common">Bovine</name>
    <dbReference type="NCBI Taxonomy" id="9913"/>
    <lineage>
        <taxon>Eukaryota</taxon>
        <taxon>Metazoa</taxon>
        <taxon>Chordata</taxon>
        <taxon>Craniata</taxon>
        <taxon>Vertebrata</taxon>
        <taxon>Euteleostomi</taxon>
        <taxon>Mammalia</taxon>
        <taxon>Eutheria</taxon>
        <taxon>Laurasiatheria</taxon>
        <taxon>Artiodactyla</taxon>
        <taxon>Ruminantia</taxon>
        <taxon>Pecora</taxon>
        <taxon>Bovidae</taxon>
        <taxon>Bovinae</taxon>
        <taxon>Bos</taxon>
    </lineage>
</organism>
<feature type="chain" id="PRO_0000395193" description="TBC1 domain family member 2A">
    <location>
        <begin position="1"/>
        <end position="925"/>
    </location>
</feature>
<feature type="domain" description="PH" evidence="4">
    <location>
        <begin position="47"/>
        <end position="144"/>
    </location>
</feature>
<feature type="domain" description="Rab-GAP TBC" evidence="5">
    <location>
        <begin position="622"/>
        <end position="814"/>
    </location>
</feature>
<feature type="region of interest" description="Interaction with CADH1" evidence="1">
    <location>
        <begin position="1"/>
        <end position="171"/>
    </location>
</feature>
<feature type="region of interest" description="Disordered" evidence="6">
    <location>
        <begin position="1"/>
        <end position="41"/>
    </location>
</feature>
<feature type="region of interest" description="Disordered" evidence="6">
    <location>
        <begin position="231"/>
        <end position="278"/>
    </location>
</feature>
<feature type="region of interest" description="Interaction with RAC1" evidence="1">
    <location>
        <begin position="297"/>
        <end position="435"/>
    </location>
</feature>
<feature type="region of interest" description="Disordered" evidence="6">
    <location>
        <begin position="904"/>
        <end position="925"/>
    </location>
</feature>
<feature type="coiled-coil region" evidence="3">
    <location>
        <begin position="302"/>
        <end position="475"/>
    </location>
</feature>
<feature type="coiled-coil region" evidence="3">
    <location>
        <begin position="872"/>
        <end position="907"/>
    </location>
</feature>
<feature type="compositionally biased region" description="Acidic residues" evidence="6">
    <location>
        <begin position="916"/>
        <end position="925"/>
    </location>
</feature>
<feature type="modified residue" description="N-acetylmethionine" evidence="2">
    <location>
        <position position="1"/>
    </location>
</feature>
<feature type="modified residue" description="Phosphoserine" evidence="2">
    <location>
        <position position="917"/>
    </location>
</feature>
<evidence type="ECO:0000250" key="1"/>
<evidence type="ECO:0000250" key="2">
    <source>
        <dbReference type="UniProtKB" id="Q9BYX2"/>
    </source>
</evidence>
<evidence type="ECO:0000255" key="3"/>
<evidence type="ECO:0000255" key="4">
    <source>
        <dbReference type="PROSITE-ProRule" id="PRU00145"/>
    </source>
</evidence>
<evidence type="ECO:0000255" key="5">
    <source>
        <dbReference type="PROSITE-ProRule" id="PRU00163"/>
    </source>
</evidence>
<evidence type="ECO:0000256" key="6">
    <source>
        <dbReference type="SAM" id="MobiDB-lite"/>
    </source>
</evidence>
<keyword id="KW-0007">Acetylation</keyword>
<keyword id="KW-0965">Cell junction</keyword>
<keyword id="KW-0175">Coiled coil</keyword>
<keyword id="KW-0963">Cytoplasm</keyword>
<keyword id="KW-0968">Cytoplasmic vesicle</keyword>
<keyword id="KW-0343">GTPase activation</keyword>
<keyword id="KW-0597">Phosphoprotein</keyword>
<keyword id="KW-1185">Reference proteome</keyword>
<comment type="function">
    <text evidence="1">May act as a GTPase-activating protein for Rab family protein(s). Signal effector acting as a linker between RAC1 and RAB7A, leading to RAB7A inactivation and further inhibition of cadherin degradation (By similarity).</text>
</comment>
<comment type="subunit">
    <text evidence="1">Interacts with activated RAC1 and CDH1.</text>
</comment>
<comment type="subcellular location">
    <subcellularLocation>
        <location evidence="1">Cytoplasm</location>
    </subcellularLocation>
    <subcellularLocation>
        <location evidence="1">Cytoplasmic vesicle</location>
    </subcellularLocation>
    <subcellularLocation>
        <location evidence="1">Cell junction</location>
    </subcellularLocation>
</comment>
<reference key="1">
    <citation type="submission" date="2007-07" db="EMBL/GenBank/DDBJ databases">
        <authorList>
            <consortium name="NIH - Mammalian Gene Collection (MGC) project"/>
        </authorList>
    </citation>
    <scope>NUCLEOTIDE SEQUENCE [LARGE SCALE MRNA]</scope>
    <source>
        <strain>Hereford</strain>
        <tissue>Uterus</tissue>
    </source>
</reference>
<gene>
    <name type="primary">TBC1D2</name>
    <name type="synonym">TBC1D2A</name>
</gene>